<protein>
    <recommendedName>
        <fullName>Crocetin glucosyltransferase 3</fullName>
        <ecNumber>2.4.1.271</ecNumber>
    </recommendedName>
</protein>
<proteinExistence type="evidence at protein level"/>
<keyword id="KW-0125">Carotenoid biosynthesis</keyword>
<keyword id="KW-0328">Glycosyltransferase</keyword>
<keyword id="KW-0808">Transferase</keyword>
<organism>
    <name type="scientific">Crocus sativus</name>
    <name type="common">Saffron</name>
    <dbReference type="NCBI Taxonomy" id="82528"/>
    <lineage>
        <taxon>Eukaryota</taxon>
        <taxon>Viridiplantae</taxon>
        <taxon>Streptophyta</taxon>
        <taxon>Embryophyta</taxon>
        <taxon>Tracheophyta</taxon>
        <taxon>Spermatophyta</taxon>
        <taxon>Magnoliopsida</taxon>
        <taxon>Liliopsida</taxon>
        <taxon>Asparagales</taxon>
        <taxon>Iridaceae</taxon>
        <taxon>Crocoideae</taxon>
        <taxon>Croceae</taxon>
        <taxon>Crocus</taxon>
    </lineage>
</organism>
<evidence type="ECO:0000250" key="1">
    <source>
        <dbReference type="UniProtKB" id="A0A0A1HA03"/>
    </source>
</evidence>
<evidence type="ECO:0000250" key="2">
    <source>
        <dbReference type="UniProtKB" id="P51094"/>
    </source>
</evidence>
<evidence type="ECO:0000269" key="3">
    <source>
    </source>
</evidence>
<evidence type="ECO:0000269" key="4">
    <source ref="2"/>
</evidence>
<evidence type="ECO:0000305" key="5"/>
<feature type="chain" id="PRO_0000418816" description="Crocetin glucosyltransferase 3">
    <location>
        <begin position="1"/>
        <end position="475"/>
    </location>
</feature>
<feature type="active site" description="Proton acceptor" evidence="1">
    <location>
        <position position="16"/>
    </location>
</feature>
<feature type="active site" description="Charge relay" evidence="1">
    <location>
        <position position="123"/>
    </location>
</feature>
<feature type="binding site" evidence="2">
    <location>
        <position position="16"/>
    </location>
    <ligand>
        <name>an anthocyanidin</name>
        <dbReference type="ChEBI" id="CHEBI:143576"/>
    </ligand>
</feature>
<feature type="binding site" evidence="1">
    <location>
        <position position="144"/>
    </location>
    <ligand>
        <name>UDP-alpha-D-glucose</name>
        <dbReference type="ChEBI" id="CHEBI:58885"/>
    </ligand>
</feature>
<feature type="binding site" evidence="1">
    <location>
        <position position="354"/>
    </location>
    <ligand>
        <name>UDP-alpha-D-glucose</name>
        <dbReference type="ChEBI" id="CHEBI:58885"/>
    </ligand>
</feature>
<feature type="binding site" evidence="1">
    <location>
        <position position="356"/>
    </location>
    <ligand>
        <name>UDP-alpha-D-glucose</name>
        <dbReference type="ChEBI" id="CHEBI:58885"/>
    </ligand>
</feature>
<feature type="binding site" evidence="1">
    <location>
        <position position="371"/>
    </location>
    <ligand>
        <name>UDP-alpha-D-glucose</name>
        <dbReference type="ChEBI" id="CHEBI:58885"/>
    </ligand>
</feature>
<feature type="binding site" evidence="1">
    <location>
        <position position="374"/>
    </location>
    <ligand>
        <name>UDP-alpha-D-glucose</name>
        <dbReference type="ChEBI" id="CHEBI:58885"/>
    </ligand>
</feature>
<feature type="binding site" evidence="1">
    <location>
        <position position="375"/>
    </location>
    <ligand>
        <name>UDP-alpha-D-glucose</name>
        <dbReference type="ChEBI" id="CHEBI:58885"/>
    </ligand>
</feature>
<feature type="binding site" evidence="1">
    <location>
        <position position="376"/>
    </location>
    <ligand>
        <name>UDP-alpha-D-glucose</name>
        <dbReference type="ChEBI" id="CHEBI:58885"/>
    </ligand>
</feature>
<feature type="binding site" evidence="1">
    <location>
        <position position="379"/>
    </location>
    <ligand>
        <name>UDP-alpha-D-glucose</name>
        <dbReference type="ChEBI" id="CHEBI:58885"/>
    </ligand>
</feature>
<feature type="binding site" evidence="2">
    <location>
        <position position="394"/>
    </location>
    <ligand>
        <name>an anthocyanidin</name>
        <dbReference type="ChEBI" id="CHEBI:143576"/>
    </ligand>
</feature>
<feature type="binding site" evidence="1">
    <location>
        <position position="395"/>
    </location>
    <ligand>
        <name>UDP-alpha-D-glucose</name>
        <dbReference type="ChEBI" id="CHEBI:58885"/>
    </ligand>
</feature>
<feature type="binding site" evidence="1">
    <location>
        <position position="396"/>
    </location>
    <ligand>
        <name>UDP-alpha-D-glucose</name>
        <dbReference type="ChEBI" id="CHEBI:58885"/>
    </ligand>
</feature>
<gene>
    <name type="primary">GLT3</name>
</gene>
<dbReference type="EC" id="2.4.1.271"/>
<dbReference type="EMBL" id="AY290820">
    <property type="protein sequence ID" value="AAQ56280.1"/>
    <property type="molecule type" value="mRNA"/>
</dbReference>
<dbReference type="SMR" id="Q6WFW1"/>
<dbReference type="CAZy" id="GT1">
    <property type="family name" value="Glycosyltransferase Family 1"/>
</dbReference>
<dbReference type="GO" id="GO:0035251">
    <property type="term" value="F:UDP-glucosyltransferase activity"/>
    <property type="evidence" value="ECO:0007669"/>
    <property type="project" value="TreeGrafter"/>
</dbReference>
<dbReference type="GO" id="GO:0016117">
    <property type="term" value="P:carotenoid biosynthetic process"/>
    <property type="evidence" value="ECO:0007669"/>
    <property type="project" value="UniProtKB-KW"/>
</dbReference>
<dbReference type="CDD" id="cd03784">
    <property type="entry name" value="GT1_Gtf-like"/>
    <property type="match status" value="1"/>
</dbReference>
<dbReference type="FunFam" id="3.40.50.2000:FF:000056">
    <property type="entry name" value="Glycosyltransferase"/>
    <property type="match status" value="1"/>
</dbReference>
<dbReference type="FunFam" id="3.40.50.2000:FF:000103">
    <property type="entry name" value="Glycosyltransferase"/>
    <property type="match status" value="1"/>
</dbReference>
<dbReference type="Gene3D" id="3.40.50.2000">
    <property type="entry name" value="Glycogen Phosphorylase B"/>
    <property type="match status" value="2"/>
</dbReference>
<dbReference type="InterPro" id="IPR002213">
    <property type="entry name" value="UDP_glucos_trans"/>
</dbReference>
<dbReference type="PANTHER" id="PTHR48047">
    <property type="entry name" value="GLYCOSYLTRANSFERASE"/>
    <property type="match status" value="1"/>
</dbReference>
<dbReference type="PANTHER" id="PTHR48047:SF107">
    <property type="entry name" value="UDP-GLYCOSYLTRANSFERASE 92A1-LIKE"/>
    <property type="match status" value="1"/>
</dbReference>
<dbReference type="Pfam" id="PF00201">
    <property type="entry name" value="UDPGT"/>
    <property type="match status" value="1"/>
</dbReference>
<dbReference type="SUPFAM" id="SSF53756">
    <property type="entry name" value="UDP-Glycosyltransferase/glycogen phosphorylase"/>
    <property type="match status" value="1"/>
</dbReference>
<accession>Q6WFW1</accession>
<name>GLT3_CROSA</name>
<sequence>MAKEHIVLFPFMSQGHIIPFLSLAKLISERHPTYTITLLNTPLNILNLQSTLPPNSNIHLKSLPYRSSDFGLPPDRENTDSLPFPLVLSFYQSGESLATHFTHFVSDLTRQNHDTPPLLIVADVFFGWTAEIAKRLNTHVSFSTCGAYGTAAYFSVWLHLPHAETDLPDFTAPGFPETFKLQRNQLSTYLKKADGSDRWSKFFQRQISLSLTSDAMICNTVEEMEAEGLRLLRKNTGLRVWSIGPLLPSLPPNSSLGRSGRKSGMEVSYIMKWLDSHPPGSVVYVSFGSIHDTAAQMTSLAVGLAVELATRSCGHSGRRFGGNRNRNSNPNGVPDEFEARMRGSGRGILIHGWAPQLEILEHESTGAFVSHCGWNSTLESLSRGVCMIGWPLAAEQFYNSKMVEEDWEWGGTCEGSGGGVRSEEVERLVRLVTEDEKGSDEENEQYDEMIGGYEEKGGEGSLSGQLIKFIGMESQ</sequence>
<comment type="function">
    <text evidence="3">Crocetin glucosyltransferase involved in the synthesis of crocin, one of the apocarotenoids responsible for the color and bitter taste of saffron.</text>
</comment>
<comment type="catalytic activity">
    <reaction evidence="4">
        <text>crocetin + UDP-alpha-D-glucose = beta-D-glucosyl crocetin + UDP</text>
        <dbReference type="Rhea" id="RHEA:31463"/>
        <dbReference type="ChEBI" id="CHEBI:58223"/>
        <dbReference type="ChEBI" id="CHEBI:58885"/>
        <dbReference type="ChEBI" id="CHEBI:62766"/>
        <dbReference type="ChEBI" id="CHEBI:62767"/>
        <dbReference type="EC" id="2.4.1.271"/>
    </reaction>
</comment>
<comment type="catalytic activity">
    <reaction evidence="4">
        <text>beta-D-glucosyl crocetin + UDP-alpha-D-glucose = bis(beta-D-glucosyl) crocetin + UDP</text>
        <dbReference type="Rhea" id="RHEA:31467"/>
        <dbReference type="ChEBI" id="CHEBI:58223"/>
        <dbReference type="ChEBI" id="CHEBI:58885"/>
        <dbReference type="ChEBI" id="CHEBI:62766"/>
        <dbReference type="ChEBI" id="CHEBI:62768"/>
        <dbReference type="EC" id="2.4.1.271"/>
    </reaction>
</comment>
<comment type="catalytic activity">
    <reaction evidence="4">
        <text>beta-D-gentiobiosyl crocetin + UDP-alpha-D-glucose = beta-D-gentiobiosyl beta-D-glucosyl crocetin + UDP</text>
        <dbReference type="Rhea" id="RHEA:31471"/>
        <dbReference type="ChEBI" id="CHEBI:58223"/>
        <dbReference type="ChEBI" id="CHEBI:58885"/>
        <dbReference type="ChEBI" id="CHEBI:62770"/>
        <dbReference type="ChEBI" id="CHEBI:62771"/>
        <dbReference type="EC" id="2.4.1.271"/>
    </reaction>
</comment>
<comment type="biophysicochemical properties">
    <kinetics>
        <KM evidence="4">0.17 mM for crocetin</KM>
        <KM evidence="4">0.72 mM for UDP-glucose</KM>
        <text>These parameters were determined on purified activity containing a mix of 2 enzymes, probably GLT2 and GLT3.</text>
    </kinetics>
</comment>
<comment type="tissue specificity">
    <text evidence="3">Mainly expressed in stamens.</text>
</comment>
<comment type="similarity">
    <text evidence="5">Belongs to the UDP-glycosyltransferase family.</text>
</comment>
<reference key="1">
    <citation type="journal article" date="2004" name="Planta">
        <title>Glucosylation of the saffron apocarotenoid crocetin by a glucosyltransferase isolated from Crocus sativus stigmas.</title>
        <authorList>
            <person name="Moraga A.R."/>
            <person name="Nohales P.F."/>
            <person name="Perez J.A."/>
            <person name="Gomez-Gomez L."/>
        </authorList>
    </citation>
    <scope>NUCLEOTIDE SEQUENCE [MRNA]</scope>
    <scope>FUNCTION</scope>
    <scope>TISSUE SPECIFICITY</scope>
</reference>
<reference key="2">
    <citation type="journal article" date="2000" name="Plant Sci.">
        <title>Properties of a glucosyltransferase involved in crocin synthesis.</title>
        <authorList>
            <person name="Cote F."/>
            <person name="Cormier F."/>
            <person name="Dufresne C."/>
            <person name="Willemot C."/>
        </authorList>
    </citation>
    <scope>CATALYTIC ACTIVITY</scope>
    <scope>BIOPHYSICOCHEMICAL PROPERTIES</scope>
</reference>